<keyword id="KW-1185">Reference proteome</keyword>
<dbReference type="EMBL" id="L77117">
    <property type="protein sequence ID" value="AAB99499.1"/>
    <property type="molecule type" value="Genomic_DNA"/>
</dbReference>
<dbReference type="PIR" id="C64485">
    <property type="entry name" value="C64485"/>
</dbReference>
<dbReference type="RefSeq" id="WP_010871006.1">
    <property type="nucleotide sequence ID" value="NC_000909.1"/>
</dbReference>
<dbReference type="STRING" id="243232.MJ_1484"/>
<dbReference type="PaxDb" id="243232-MJ_1484"/>
<dbReference type="EnsemblBacteria" id="AAB99499">
    <property type="protein sequence ID" value="AAB99499"/>
    <property type="gene ID" value="MJ_1484"/>
</dbReference>
<dbReference type="GeneID" id="1452390"/>
<dbReference type="KEGG" id="mja:MJ_1484"/>
<dbReference type="eggNOG" id="arCOG14906">
    <property type="taxonomic scope" value="Archaea"/>
</dbReference>
<dbReference type="HOGENOM" id="CLU_1736428_0_0_2"/>
<dbReference type="InParanoid" id="Q58879"/>
<dbReference type="OrthoDB" id="382986at2157"/>
<dbReference type="Proteomes" id="UP000000805">
    <property type="component" value="Chromosome"/>
</dbReference>
<reference key="1">
    <citation type="journal article" date="1996" name="Science">
        <title>Complete genome sequence of the methanogenic archaeon, Methanococcus jannaschii.</title>
        <authorList>
            <person name="Bult C.J."/>
            <person name="White O."/>
            <person name="Olsen G.J."/>
            <person name="Zhou L."/>
            <person name="Fleischmann R.D."/>
            <person name="Sutton G.G."/>
            <person name="Blake J.A."/>
            <person name="FitzGerald L.M."/>
            <person name="Clayton R.A."/>
            <person name="Gocayne J.D."/>
            <person name="Kerlavage A.R."/>
            <person name="Dougherty B.A."/>
            <person name="Tomb J.-F."/>
            <person name="Adams M.D."/>
            <person name="Reich C.I."/>
            <person name="Overbeek R."/>
            <person name="Kirkness E.F."/>
            <person name="Weinstock K.G."/>
            <person name="Merrick J.M."/>
            <person name="Glodek A."/>
            <person name="Scott J.L."/>
            <person name="Geoghagen N.S.M."/>
            <person name="Weidman J.F."/>
            <person name="Fuhrmann J.L."/>
            <person name="Nguyen D."/>
            <person name="Utterback T.R."/>
            <person name="Kelley J.M."/>
            <person name="Peterson J.D."/>
            <person name="Sadow P.W."/>
            <person name="Hanna M.C."/>
            <person name="Cotton M.D."/>
            <person name="Roberts K.M."/>
            <person name="Hurst M.A."/>
            <person name="Kaine B.P."/>
            <person name="Borodovsky M."/>
            <person name="Klenk H.-P."/>
            <person name="Fraser C.M."/>
            <person name="Smith H.O."/>
            <person name="Woese C.R."/>
            <person name="Venter J.C."/>
        </authorList>
    </citation>
    <scope>NUCLEOTIDE SEQUENCE [LARGE SCALE GENOMIC DNA]</scope>
    <source>
        <strain>ATCC 43067 / DSM 2661 / JAL-1 / JCM 10045 / NBRC 100440</strain>
    </source>
</reference>
<accession>Q58879</accession>
<organism>
    <name type="scientific">Methanocaldococcus jannaschii (strain ATCC 43067 / DSM 2661 / JAL-1 / JCM 10045 / NBRC 100440)</name>
    <name type="common">Methanococcus jannaschii</name>
    <dbReference type="NCBI Taxonomy" id="243232"/>
    <lineage>
        <taxon>Archaea</taxon>
        <taxon>Methanobacteriati</taxon>
        <taxon>Methanobacteriota</taxon>
        <taxon>Methanomada group</taxon>
        <taxon>Methanococci</taxon>
        <taxon>Methanococcales</taxon>
        <taxon>Methanocaldococcaceae</taxon>
        <taxon>Methanocaldococcus</taxon>
    </lineage>
</organism>
<name>Y1484_METJA</name>
<protein>
    <recommendedName>
        <fullName>Uncharacterized protein MJ1484</fullName>
    </recommendedName>
</protein>
<proteinExistence type="predicted"/>
<gene>
    <name type="ordered locus">MJ1484</name>
</gene>
<feature type="chain" id="PRO_0000107370" description="Uncharacterized protein MJ1484">
    <location>
        <begin position="1"/>
        <end position="150"/>
    </location>
</feature>
<sequence>MEIFTIKYNASLFSNKTLRDKVYKILKENTKSYYESNSNGFFRIGGISRVDYINNNSIYFKGECKKYFGKNEVIITNFWIFKNESLADKFYNKMLKEYGNKSYIDKNPKLKYYNMSEIINYSVEMYDKDVVLIKEHTKDIKLFEVNVSMG</sequence>